<protein>
    <recommendedName>
        <fullName evidence="1">Cystic fibrosis transmembrane conductance regulator</fullName>
        <shortName>CFTR</shortName>
    </recommendedName>
    <alternativeName>
        <fullName>ATP-binding cassette sub-family C member 7</fullName>
    </alternativeName>
    <alternativeName>
        <fullName>Channel conductance-controlling ATPase</fullName>
        <ecNumber evidence="1">5.6.1.6</ecNumber>
    </alternativeName>
    <alternativeName>
        <fullName>cAMP-dependent chloride channel</fullName>
    </alternativeName>
</protein>
<dbReference type="EC" id="5.6.1.6" evidence="1"/>
<dbReference type="EMBL" id="DP000028">
    <property type="protein sequence ID" value="ABC87480.1"/>
    <property type="molecule type" value="Genomic_DNA"/>
</dbReference>
<dbReference type="SMR" id="Q2IBB3"/>
<dbReference type="FunCoup" id="Q2IBB3">
    <property type="interactions" value="147"/>
</dbReference>
<dbReference type="GlyCosmos" id="Q2IBB3">
    <property type="glycosylation" value="2 sites, No reported glycans"/>
</dbReference>
<dbReference type="InParanoid" id="Q2IBB3"/>
<dbReference type="Proteomes" id="UP000472240">
    <property type="component" value="Unplaced"/>
</dbReference>
<dbReference type="GO" id="GO:0016324">
    <property type="term" value="C:apical plasma membrane"/>
    <property type="evidence" value="ECO:0000250"/>
    <property type="project" value="UniProtKB"/>
</dbReference>
<dbReference type="GO" id="GO:0034707">
    <property type="term" value="C:chloride channel complex"/>
    <property type="evidence" value="ECO:0007669"/>
    <property type="project" value="UniProtKB-KW"/>
</dbReference>
<dbReference type="GO" id="GO:0005829">
    <property type="term" value="C:cytosol"/>
    <property type="evidence" value="ECO:0007669"/>
    <property type="project" value="TreeGrafter"/>
</dbReference>
<dbReference type="GO" id="GO:0005769">
    <property type="term" value="C:early endosome"/>
    <property type="evidence" value="ECO:0000250"/>
    <property type="project" value="UniProtKB"/>
</dbReference>
<dbReference type="GO" id="GO:0031901">
    <property type="term" value="C:early endosome membrane"/>
    <property type="evidence" value="ECO:0007669"/>
    <property type="project" value="UniProtKB-SubCell"/>
</dbReference>
<dbReference type="GO" id="GO:0005789">
    <property type="term" value="C:endoplasmic reticulum membrane"/>
    <property type="evidence" value="ECO:0000250"/>
    <property type="project" value="UniProtKB"/>
</dbReference>
<dbReference type="GO" id="GO:0016020">
    <property type="term" value="C:membrane"/>
    <property type="evidence" value="ECO:0000250"/>
    <property type="project" value="UniProtKB"/>
</dbReference>
<dbReference type="GO" id="GO:0005634">
    <property type="term" value="C:nucleus"/>
    <property type="evidence" value="ECO:0000250"/>
    <property type="project" value="UniProtKB"/>
</dbReference>
<dbReference type="GO" id="GO:0005886">
    <property type="term" value="C:plasma membrane"/>
    <property type="evidence" value="ECO:0000250"/>
    <property type="project" value="UniProtKB"/>
</dbReference>
<dbReference type="GO" id="GO:0055038">
    <property type="term" value="C:recycling endosome membrane"/>
    <property type="evidence" value="ECO:0007669"/>
    <property type="project" value="UniProtKB-SubCell"/>
</dbReference>
<dbReference type="GO" id="GO:0140359">
    <property type="term" value="F:ABC-type transporter activity"/>
    <property type="evidence" value="ECO:0007669"/>
    <property type="project" value="InterPro"/>
</dbReference>
<dbReference type="GO" id="GO:0005524">
    <property type="term" value="F:ATP binding"/>
    <property type="evidence" value="ECO:0007669"/>
    <property type="project" value="UniProtKB-KW"/>
</dbReference>
<dbReference type="GO" id="GO:0016887">
    <property type="term" value="F:ATP hydrolysis activity"/>
    <property type="evidence" value="ECO:0000250"/>
    <property type="project" value="UniProtKB"/>
</dbReference>
<dbReference type="GO" id="GO:0015106">
    <property type="term" value="F:bicarbonate transmembrane transporter activity"/>
    <property type="evidence" value="ECO:0000250"/>
    <property type="project" value="UniProtKB"/>
</dbReference>
<dbReference type="GO" id="GO:0005254">
    <property type="term" value="F:chloride channel activity"/>
    <property type="evidence" value="ECO:0000250"/>
    <property type="project" value="UniProtKB"/>
</dbReference>
<dbReference type="GO" id="GO:0019869">
    <property type="term" value="F:chloride channel inhibitor activity"/>
    <property type="evidence" value="ECO:0000250"/>
    <property type="project" value="UniProtKB"/>
</dbReference>
<dbReference type="GO" id="GO:0015108">
    <property type="term" value="F:chloride transmembrane transporter activity"/>
    <property type="evidence" value="ECO:0000250"/>
    <property type="project" value="UniProtKB"/>
</dbReference>
<dbReference type="GO" id="GO:0005260">
    <property type="term" value="F:intracellularly ATP-gated chloride channel activity"/>
    <property type="evidence" value="ECO:0000250"/>
    <property type="project" value="UniProtKB"/>
</dbReference>
<dbReference type="GO" id="GO:0015701">
    <property type="term" value="P:bicarbonate transport"/>
    <property type="evidence" value="ECO:0000250"/>
    <property type="project" value="UniProtKB"/>
</dbReference>
<dbReference type="GO" id="GO:0071320">
    <property type="term" value="P:cellular response to cAMP"/>
    <property type="evidence" value="ECO:0000250"/>
    <property type="project" value="UniProtKB"/>
</dbReference>
<dbReference type="GO" id="GO:1904322">
    <property type="term" value="P:cellular response to forskolin"/>
    <property type="evidence" value="ECO:0000250"/>
    <property type="project" value="UniProtKB"/>
</dbReference>
<dbReference type="GO" id="GO:1902476">
    <property type="term" value="P:chloride transmembrane transport"/>
    <property type="evidence" value="ECO:0000250"/>
    <property type="project" value="UniProtKB"/>
</dbReference>
<dbReference type="GO" id="GO:0051454">
    <property type="term" value="P:intracellular pH elevation"/>
    <property type="evidence" value="ECO:0000250"/>
    <property type="project" value="UniProtKB"/>
</dbReference>
<dbReference type="GO" id="GO:0060081">
    <property type="term" value="P:membrane hyperpolarization"/>
    <property type="evidence" value="ECO:0000250"/>
    <property type="project" value="UniProtKB"/>
</dbReference>
<dbReference type="GO" id="GO:0050891">
    <property type="term" value="P:multicellular organismal-level water homeostasis"/>
    <property type="evidence" value="ECO:0000250"/>
    <property type="project" value="UniProtKB"/>
</dbReference>
<dbReference type="GO" id="GO:0034976">
    <property type="term" value="P:response to endoplasmic reticulum stress"/>
    <property type="evidence" value="ECO:0000250"/>
    <property type="project" value="UniProtKB"/>
</dbReference>
<dbReference type="GO" id="GO:0048240">
    <property type="term" value="P:sperm capacitation"/>
    <property type="evidence" value="ECO:0000250"/>
    <property type="project" value="UniProtKB"/>
</dbReference>
<dbReference type="GO" id="GO:0035377">
    <property type="term" value="P:transepithelial water transport"/>
    <property type="evidence" value="ECO:0000250"/>
    <property type="project" value="UniProtKB"/>
</dbReference>
<dbReference type="CDD" id="cd18594">
    <property type="entry name" value="ABC_6TM_CFTR_D1"/>
    <property type="match status" value="1"/>
</dbReference>
<dbReference type="CDD" id="cd18600">
    <property type="entry name" value="ABC_6TM_CFTR_D2"/>
    <property type="match status" value="1"/>
</dbReference>
<dbReference type="CDD" id="cd03291">
    <property type="entry name" value="ABCC_CFTR1"/>
    <property type="match status" value="1"/>
</dbReference>
<dbReference type="CDD" id="cd03289">
    <property type="entry name" value="ABCC_CFTR2"/>
    <property type="match status" value="1"/>
</dbReference>
<dbReference type="FunFam" id="1.20.1560.10:FF:000017">
    <property type="entry name" value="Cystic fibrosis transmembrane conductance regulator"/>
    <property type="match status" value="1"/>
</dbReference>
<dbReference type="FunFam" id="1.20.1560.10:FF:000019">
    <property type="entry name" value="Cystic fibrosis transmembrane conductance regulator"/>
    <property type="match status" value="1"/>
</dbReference>
<dbReference type="FunFam" id="3.40.50.300:FF:000581">
    <property type="entry name" value="Cystic fibrosis transmembrane conductance regulator"/>
    <property type="match status" value="1"/>
</dbReference>
<dbReference type="FunFam" id="3.40.50.300:FF:000591">
    <property type="entry name" value="Cystic fibrosis transmembrane conductance regulator"/>
    <property type="match status" value="1"/>
</dbReference>
<dbReference type="Gene3D" id="1.20.1560.10">
    <property type="entry name" value="ABC transporter type 1, transmembrane domain"/>
    <property type="match status" value="2"/>
</dbReference>
<dbReference type="Gene3D" id="3.40.50.300">
    <property type="entry name" value="P-loop containing nucleotide triphosphate hydrolases"/>
    <property type="match status" value="2"/>
</dbReference>
<dbReference type="InterPro" id="IPR003593">
    <property type="entry name" value="AAA+_ATPase"/>
</dbReference>
<dbReference type="InterPro" id="IPR011527">
    <property type="entry name" value="ABC1_TM_dom"/>
</dbReference>
<dbReference type="InterPro" id="IPR036640">
    <property type="entry name" value="ABC1_TM_sf"/>
</dbReference>
<dbReference type="InterPro" id="IPR003439">
    <property type="entry name" value="ABC_transporter-like_ATP-bd"/>
</dbReference>
<dbReference type="InterPro" id="IPR017871">
    <property type="entry name" value="ABC_transporter-like_CS"/>
</dbReference>
<dbReference type="InterPro" id="IPR050173">
    <property type="entry name" value="ABC_transporter_C-like"/>
</dbReference>
<dbReference type="InterPro" id="IPR009147">
    <property type="entry name" value="CFTR/ABCC7"/>
</dbReference>
<dbReference type="InterPro" id="IPR047082">
    <property type="entry name" value="CFTR1_ATP-bd_dom1"/>
</dbReference>
<dbReference type="InterPro" id="IPR025837">
    <property type="entry name" value="CFTR_reg_dom"/>
</dbReference>
<dbReference type="InterPro" id="IPR027417">
    <property type="entry name" value="P-loop_NTPase"/>
</dbReference>
<dbReference type="NCBIfam" id="TIGR01271">
    <property type="entry name" value="CFTR_protein"/>
    <property type="match status" value="1"/>
</dbReference>
<dbReference type="PANTHER" id="PTHR24223">
    <property type="entry name" value="ATP-BINDING CASSETTE SUB-FAMILY C"/>
    <property type="match status" value="1"/>
</dbReference>
<dbReference type="PANTHER" id="PTHR24223:SF19">
    <property type="entry name" value="CYSTIC FIBROSIS TRANSMEMBRANE CONDUCTANCE REGULATOR"/>
    <property type="match status" value="1"/>
</dbReference>
<dbReference type="Pfam" id="PF00664">
    <property type="entry name" value="ABC_membrane"/>
    <property type="match status" value="2"/>
</dbReference>
<dbReference type="Pfam" id="PF00005">
    <property type="entry name" value="ABC_tran"/>
    <property type="match status" value="2"/>
</dbReference>
<dbReference type="Pfam" id="PF14396">
    <property type="entry name" value="CFTR_R"/>
    <property type="match status" value="1"/>
</dbReference>
<dbReference type="PRINTS" id="PR01851">
    <property type="entry name" value="CYSFIBREGLTR"/>
</dbReference>
<dbReference type="SMART" id="SM00382">
    <property type="entry name" value="AAA"/>
    <property type="match status" value="2"/>
</dbReference>
<dbReference type="SUPFAM" id="SSF90123">
    <property type="entry name" value="ABC transporter transmembrane region"/>
    <property type="match status" value="2"/>
</dbReference>
<dbReference type="SUPFAM" id="SSF52540">
    <property type="entry name" value="P-loop containing nucleoside triphosphate hydrolases"/>
    <property type="match status" value="2"/>
</dbReference>
<dbReference type="PROSITE" id="PS50929">
    <property type="entry name" value="ABC_TM1F"/>
    <property type="match status" value="2"/>
</dbReference>
<dbReference type="PROSITE" id="PS00211">
    <property type="entry name" value="ABC_TRANSPORTER_1"/>
    <property type="match status" value="1"/>
</dbReference>
<dbReference type="PROSITE" id="PS50893">
    <property type="entry name" value="ABC_TRANSPORTER_2"/>
    <property type="match status" value="2"/>
</dbReference>
<organism>
    <name type="scientific">Rhinolophus ferrumequinum</name>
    <name type="common">Greater horseshoe bat</name>
    <dbReference type="NCBI Taxonomy" id="59479"/>
    <lineage>
        <taxon>Eukaryota</taxon>
        <taxon>Metazoa</taxon>
        <taxon>Chordata</taxon>
        <taxon>Craniata</taxon>
        <taxon>Vertebrata</taxon>
        <taxon>Euteleostomi</taxon>
        <taxon>Mammalia</taxon>
        <taxon>Eutheria</taxon>
        <taxon>Laurasiatheria</taxon>
        <taxon>Chiroptera</taxon>
        <taxon>Yinpterochiroptera</taxon>
        <taxon>Rhinolophoidea</taxon>
        <taxon>Rhinolophidae</taxon>
        <taxon>Rhinolophinae</taxon>
        <taxon>Rhinolophus</taxon>
    </lineage>
</organism>
<proteinExistence type="inferred from homology"/>
<keyword id="KW-0067">ATP-binding</keyword>
<keyword id="KW-1003">Cell membrane</keyword>
<keyword id="KW-0868">Chloride</keyword>
<keyword id="KW-0869">Chloride channel</keyword>
<keyword id="KW-0256">Endoplasmic reticulum</keyword>
<keyword id="KW-0967">Endosome</keyword>
<keyword id="KW-0325">Glycoprotein</keyword>
<keyword id="KW-0407">Ion channel</keyword>
<keyword id="KW-0406">Ion transport</keyword>
<keyword id="KW-0413">Isomerase</keyword>
<keyword id="KW-1017">Isopeptide bond</keyword>
<keyword id="KW-0449">Lipoprotein</keyword>
<keyword id="KW-0472">Membrane</keyword>
<keyword id="KW-0547">Nucleotide-binding</keyword>
<keyword id="KW-0539">Nucleus</keyword>
<keyword id="KW-0564">Palmitate</keyword>
<keyword id="KW-0597">Phosphoprotein</keyword>
<keyword id="KW-1185">Reference proteome</keyword>
<keyword id="KW-0677">Repeat</keyword>
<keyword id="KW-0812">Transmembrane</keyword>
<keyword id="KW-1133">Transmembrane helix</keyword>
<keyword id="KW-0813">Transport</keyword>
<keyword id="KW-0832">Ubl conjugation</keyword>
<reference key="1">
    <citation type="submission" date="2006-01" db="EMBL/GenBank/DDBJ databases">
        <title>NISC comparative sequencing initiative.</title>
        <authorList>
            <person name="Antonellis A."/>
            <person name="Ayele K."/>
            <person name="Benjamin B."/>
            <person name="Blakesley R.W."/>
            <person name="Boakye A."/>
            <person name="Bouffard G.G."/>
            <person name="Brinkley C."/>
            <person name="Brooks S."/>
            <person name="Chu G."/>
            <person name="Coleman H."/>
            <person name="Engle J."/>
            <person name="Gestole M."/>
            <person name="Greene A."/>
            <person name="Guan X."/>
            <person name="Gupta J."/>
            <person name="Haghighi P."/>
            <person name="Han J."/>
            <person name="Hansen N."/>
            <person name="Ho S.-L."/>
            <person name="Hu P."/>
            <person name="Hunter G."/>
            <person name="Hurle B."/>
            <person name="Idol J.R."/>
            <person name="Kwong P."/>
            <person name="Laric P."/>
            <person name="Larson S."/>
            <person name="Lee-Lin S.-Q."/>
            <person name="Legaspi R."/>
            <person name="Madden M."/>
            <person name="Maduro Q.L."/>
            <person name="Maduro V.B."/>
            <person name="Margulies E.H."/>
            <person name="Masiello C."/>
            <person name="Maskeri B."/>
            <person name="McDowell J."/>
            <person name="Mojidi H.A."/>
            <person name="Mullikin J.C."/>
            <person name="Oestreicher J.S."/>
            <person name="Park M."/>
            <person name="Portnoy M.E."/>
            <person name="Prasad A."/>
            <person name="Puri O."/>
            <person name="Reddix-Dugue N."/>
            <person name="Schandler K."/>
            <person name="Schueler M.G."/>
            <person name="Sison C."/>
            <person name="Stantripop S."/>
            <person name="Stephen E."/>
            <person name="Taye A."/>
            <person name="Thomas J.W."/>
            <person name="Thomas P.J."/>
            <person name="Tsipouri V."/>
            <person name="Ung L."/>
            <person name="Vogt J.L."/>
            <person name="Wetherby K.D."/>
            <person name="Young A."/>
            <person name="Green E.D."/>
        </authorList>
    </citation>
    <scope>NUCLEOTIDE SEQUENCE [LARGE SCALE GENOMIC DNA]</scope>
</reference>
<name>CFTR_RHIFE</name>
<sequence>MQRSPLEKASVISKLFFSWTIPILKKGYRQRLELSDIYQISSADSADNLSEKLEREWDRELASKKNPKLINALQRCFFWRFTFYGILLYLGEVTKAIQPLLLGRIIASYDPDNKMERSIAIYLGIGLCLLFIMRTLLLHPAIFGLHHIGMQMRIALFSLIYKKTLKLSSRVLDKISIGQLVSLLSNNLNKFDEGLALAHFVWIAPLQVMLLMGLLWELLQASAFCGLAFLIVLALLQAGLGRMMMKYRDQRAGKINERLVITSEMIENIQSVKAYCWEEAMEKMIENLRQTELRLTRKAAYVRYVNSSAFFFSGFFVVFLSVLPYALIKGIILRKIFTTISFCIVLRMAVTRQFPWAVQTWYDSLGAINKIQEFLQKQEHKTLEYNLTTTEVVMENVTAFWEEGVGELFENAKQNNNSGNISSGDNRLFFSNFAILSTPVLRGINFKVERGQLLAVAGSTGAGKTSLLMMIMGELEPSEGKIKHSGRISFCSQFSWIMPGTIKENIIFGVSYDEYRYRSVIKACQLEEDISKFAEKDNIVLGEGGITLSGGQRARISLARAVYKDADLYLLDSPFGYLDVLTEKEIFERCVCKLMANKTRILVTSKMEHLKKADKILILHEGSSYFYGTFSELLNLRPDFSSKLMGYDSFDQFSAERRNSILTETLRRFSFEGDAAGPWNEPKKQSFKQTGEFGEKRKSSVLNPINAIKRFSIVQKTPLQMNGIEEDSEESSERRLSLVPDSEQGETILPRSNLINTGPTFQGRRRQSVLNLMTHSSVNQGQIVHRSTAASTRKMSLAPQENFTEMDIYSRRLSQDNGLEISEEINEEDLKECLFDDLESIPAVTTWNTYLRYITVHKNLIFVLIWCLVIFLAEVAASLVAFWLIEKTRPQDKGNSTRSTNNTSPVIITSTSAFYMFYIYVGVADSLLALGFLRGLPLVHTLITVSKILHQKMLHSVLHAPMSTLNTLKAGAILNRFSKDIAILDDLLPLTIFDFIQLVLIVIGAVVVVSILKPYIFLAAVPVIIAFVILRAYFLQTSQQLKQLESEGRSPIFTHLVTSLKGLWTLRAFGRQPYFETLFHKALNLHTATWFLYLSTLRWFQMRIEMIFVVFFVAVTFISILTTGEGEGTVGIILTLAMNIMSTLQWAVNSSIDVDSLMRSVSRVFKFIDMPAEESKYTKSVKPYKDGQLSKVMILENQHVKKDDIWPSGGQITVKDLTAKYIDGGNAILENISFSISPGQRVGLLGRTGSGKSTLLSALLRLLNTEGEIQVDGVSWESVTVQQWRRAFGVIPQKVFIFSGTFRKNLDPYGQWNDQEIWKVADEVGLRSVIEQFPGNLDFVLVDGGFVLSHGHKQLMCLARSVLSKAKILLLDEPSAHLDPITYQIIRRALKQAFADCTVILCEHRIEAMLECQRFLVIEENKVRQYDSMQKLLSEKSLFQQAISPSDRLKLFPQRSSSKHRSRAQITALKEEAEEEVQDTRL</sequence>
<accession>Q2IBB3</accession>
<comment type="function">
    <text evidence="1 2">Epithelial ion channel that plays an important role in the regulation of epithelial ion and water transport and fluid homeostasis. Mediates the transport of chloride ions across the cell membrane (By similarity). Possesses an intrinsic ATPase activity and utilizes ATP to gate its channel; the passive flow of anions through the channel is gated by cycles of ATP binding and hydrolysis by the ATP-binding domains (By similarity). The ion channel is also permeable to HCO(3)(-); selectivity depends on the extracellular chloride concentration. Exerts its function also by modulating the activity of other ion channels and transporters. Contributes to the regulation of the pH and the ion content of the epithelial fluid layer. Modulates the activity of the epithelial sodium channel (ENaC) complex, in part by regulating the cell surface expression of the ENaC complex. May regulate bicarbonate secretion and salvage in epithelial cells by regulating the transporter SLC4A7. Can inhibit the chloride channel activity of ANO1 (By similarity). Plays a role in the chloride and bicarbonate homeostasis during sperm epididymal maturation and capacitation (By similarity).</text>
</comment>
<comment type="catalytic activity">
    <reaction evidence="1">
        <text>ATP + H2O + closed Cl(-) channel = ADP + phosphate + open Cl(-) channel.</text>
        <dbReference type="EC" id="5.6.1.6"/>
    </reaction>
</comment>
<comment type="catalytic activity">
    <reaction evidence="1">
        <text>chloride(in) = chloride(out)</text>
        <dbReference type="Rhea" id="RHEA:29823"/>
        <dbReference type="ChEBI" id="CHEBI:17996"/>
    </reaction>
</comment>
<comment type="catalytic activity">
    <reaction evidence="1">
        <text>hydrogencarbonate(in) = hydrogencarbonate(out)</text>
        <dbReference type="Rhea" id="RHEA:28695"/>
        <dbReference type="ChEBI" id="CHEBI:17544"/>
    </reaction>
</comment>
<comment type="catalytic activity">
    <reaction evidence="1">
        <text>ATP + H2O = ADP + phosphate + H(+)</text>
        <dbReference type="Rhea" id="RHEA:13065"/>
        <dbReference type="ChEBI" id="CHEBI:15377"/>
        <dbReference type="ChEBI" id="CHEBI:15378"/>
        <dbReference type="ChEBI" id="CHEBI:30616"/>
        <dbReference type="ChEBI" id="CHEBI:43474"/>
        <dbReference type="ChEBI" id="CHEBI:456216"/>
    </reaction>
    <physiologicalReaction direction="left-to-right" evidence="1">
        <dbReference type="Rhea" id="RHEA:13066"/>
    </physiologicalReaction>
</comment>
<comment type="subunit">
    <text evidence="1 2 3">Monomer; does not require oligomerization for channel activity. May form oligomers in the membrane (By similarity). Interacts with SLC26A3, SLC26A6 and NHERF1 (By similarity). Interacts with SHANK2 (By similarity). Interacts with MYO6 (By similarity). Interacts (via C-terminus) with GOPC (via PDZ domain); this promotes CFTR internalization and thereby decreases channel activity. Interacts with SLC4A7 through NHERF1. Found in a complex with MYO5B and RAB11A. Interacts with ANO1. Interacts with SLC26A8 (By similarity). Interacts with AHCYL1; the interaction increases CFTR activity (By similarity). Interacts with CSE1L (By similarity). The core-glycosylated form interacts with GORASP2 (via PDZ GRASP-type 1 domain) in respone to ER stress (By similarity). Interacts with MARCHF2; the interaction leads to CFTR ubiqtuitination and degradation (By similarity). Interacts with ADGRG2 (By similarity).</text>
</comment>
<comment type="subcellular location">
    <subcellularLocation>
        <location evidence="2">Apical cell membrane</location>
        <topology evidence="1">Multi-pass membrane protein</topology>
    </subcellularLocation>
    <subcellularLocation>
        <location evidence="1">Early endosome membrane</location>
        <topology evidence="1">Multi-pass membrane protein</topology>
    </subcellularLocation>
    <subcellularLocation>
        <location evidence="2">Cell membrane</location>
        <topology evidence="1">Multi-pass membrane protein</topology>
    </subcellularLocation>
    <subcellularLocation>
        <location evidence="1">Recycling endosome membrane</location>
        <topology evidence="1">Multi-pass membrane protein</topology>
    </subcellularLocation>
    <subcellularLocation>
        <location evidence="1">Endoplasmic reticulum membrane</location>
        <topology evidence="1">Multi-pass membrane protein</topology>
    </subcellularLocation>
    <subcellularLocation>
        <location evidence="3">Nucleus</location>
    </subcellularLocation>
    <text evidence="1 3">The channel is internalized from the cell surface into an endosomal recycling compartment, from where it is recycled to the cell membrane. In the oviduct and bronchus, detected on the apical side of epithelial cells, but not associated with cilia. In Sertoli cells, a processed product is detected in the nucleus. ER stress induces GORASP2-mediated unconventional (ER/Golgi-independent) trafficking of core-glycosylated CFTR to cell membrane.</text>
</comment>
<comment type="domain">
    <text evidence="1 2">Binds and hydrolyzes ATP via the two cytoplasmic ABC transporter nucleotide-binding domains. The two ATP-binding domains interact with each other, forming a head-to-tail dimer. Normal ATPase activity requires interaction between the two domains. The first ABC transporter nucleotide-binding domain has no ATPase activity by itself.</text>
</comment>
<comment type="domain">
    <text evidence="1">The PDZ-binding motif mediates interactions with GOPC and with the SLC4A7, NHERF1/EBP50 complex.</text>
</comment>
<comment type="domain">
    <text evidence="1">The disordered R region mediates channel activation when it is phosphorylated, but not in the absence of phosphorylation.</text>
</comment>
<comment type="PTM">
    <text evidence="1">N-glycosylated.</text>
</comment>
<comment type="PTM">
    <text evidence="1">Phosphorylated; cAMP treatment promotes phosphorylation and activates the channel. Dephosphorylation decreases the ATPase activity (in vitro). Phosphorylation at PKA sites activates the channel. Phosphorylation at PKC sites enhances the response to phosphorylation by PKA. Phosphorylated by AMPK; this inhibits channel activity.</text>
</comment>
<comment type="PTM">
    <text evidence="1">Ubiquitinated, leading to its degradation in the lysosome. Deubiquitination by USP10 in early endosomes enhances its endocytic recycling to the cell membrane. Ubiquitinated by RNF185 during ER stress. Ubiquitinated by MARCHF2 (By similarity).</text>
</comment>
<comment type="similarity">
    <text evidence="8">Belongs to the ABC transporter superfamily. ABCC family. CFTR transporter (TC 3.A.1.202) subfamily.</text>
</comment>
<gene>
    <name evidence="1" type="primary">CFTR</name>
    <name type="synonym">ABCC7</name>
</gene>
<feature type="chain" id="PRO_0000260781" description="Cystic fibrosis transmembrane conductance regulator">
    <location>
        <begin position="1"/>
        <end position="1482"/>
    </location>
</feature>
<feature type="topological domain" description="Cytoplasmic" evidence="1">
    <location>
        <begin position="1"/>
        <end position="77"/>
    </location>
</feature>
<feature type="transmembrane region" description="Helical; Name=1" evidence="1">
    <location>
        <begin position="78"/>
        <end position="98"/>
    </location>
</feature>
<feature type="topological domain" description="Extracellular" evidence="1">
    <location>
        <begin position="99"/>
        <end position="122"/>
    </location>
</feature>
<feature type="transmembrane region" description="Helical; Name=2" evidence="1">
    <location>
        <begin position="123"/>
        <end position="146"/>
    </location>
</feature>
<feature type="topological domain" description="Cytoplasmic" evidence="1">
    <location>
        <begin position="147"/>
        <end position="195"/>
    </location>
</feature>
<feature type="transmembrane region" description="Helical; Name=3" evidence="1">
    <location>
        <begin position="196"/>
        <end position="216"/>
    </location>
</feature>
<feature type="topological domain" description="Extracellular" evidence="1">
    <location>
        <begin position="217"/>
        <end position="222"/>
    </location>
</feature>
<feature type="transmembrane region" description="Helical; Name=4" evidence="1">
    <location>
        <begin position="223"/>
        <end position="243"/>
    </location>
</feature>
<feature type="topological domain" description="Cytoplasmic" evidence="1">
    <location>
        <begin position="244"/>
        <end position="298"/>
    </location>
</feature>
<feature type="transmembrane region" description="Helical; Name=5" evidence="1">
    <location>
        <begin position="299"/>
        <end position="319"/>
    </location>
</feature>
<feature type="topological domain" description="Extracellular" evidence="1">
    <location>
        <begin position="320"/>
        <end position="339"/>
    </location>
</feature>
<feature type="transmembrane region" description="Helical; Name=6" evidence="1">
    <location>
        <begin position="340"/>
        <end position="358"/>
    </location>
</feature>
<feature type="topological domain" description="Cytoplasmic" evidence="1">
    <location>
        <begin position="359"/>
        <end position="859"/>
    </location>
</feature>
<feature type="transmembrane region" description="Helical; Name=7" evidence="1">
    <location>
        <begin position="860"/>
        <end position="880"/>
    </location>
</feature>
<feature type="topological domain" description="Extracellular" evidence="1">
    <location>
        <begin position="881"/>
        <end position="919"/>
    </location>
</feature>
<feature type="transmembrane region" description="Discontinuously helical; Name=8" evidence="1">
    <location>
        <begin position="920"/>
        <end position="940"/>
    </location>
</feature>
<feature type="topological domain" description="Cytoplasmic" evidence="1">
    <location>
        <begin position="941"/>
        <end position="991"/>
    </location>
</feature>
<feature type="transmembrane region" description="Helical; Name=9" evidence="1">
    <location>
        <begin position="992"/>
        <end position="1012"/>
    </location>
</feature>
<feature type="topological domain" description="Extracellular" evidence="1">
    <location>
        <begin position="1013"/>
        <end position="1014"/>
    </location>
</feature>
<feature type="transmembrane region" description="Helical; Name=10" evidence="1">
    <location>
        <begin position="1015"/>
        <end position="1035"/>
    </location>
</feature>
<feature type="topological domain" description="Cytoplasmic" evidence="1">
    <location>
        <begin position="1036"/>
        <end position="1096"/>
    </location>
</feature>
<feature type="transmembrane region" description="Helical; Name=11" evidence="1">
    <location>
        <begin position="1097"/>
        <end position="1117"/>
    </location>
</feature>
<feature type="topological domain" description="Extracellular" evidence="1">
    <location>
        <begin position="1118"/>
        <end position="1131"/>
    </location>
</feature>
<feature type="transmembrane region" description="Helical; Name=12" evidence="1">
    <location>
        <begin position="1132"/>
        <end position="1152"/>
    </location>
</feature>
<feature type="topological domain" description="Cytoplasmic" evidence="1">
    <location>
        <begin position="1153"/>
        <end position="1482"/>
    </location>
</feature>
<feature type="domain" description="ABC transmembrane type-1 1" evidence="6">
    <location>
        <begin position="81"/>
        <end position="365"/>
    </location>
</feature>
<feature type="domain" description="ABC transporter 1" evidence="5">
    <location>
        <begin position="423"/>
        <end position="646"/>
    </location>
</feature>
<feature type="domain" description="ABC transmembrane type-1 2" evidence="6">
    <location>
        <begin position="860"/>
        <end position="1156"/>
    </location>
</feature>
<feature type="domain" description="ABC transporter 2" evidence="5">
    <location>
        <begin position="1212"/>
        <end position="1445"/>
    </location>
</feature>
<feature type="region of interest" description="Disordered R region" evidence="1">
    <location>
        <begin position="654"/>
        <end position="832"/>
    </location>
</feature>
<feature type="region of interest" description="Interaction with GORASP2" evidence="1">
    <location>
        <begin position="1388"/>
        <end position="1482"/>
    </location>
</feature>
<feature type="region of interest" description="Disordered" evidence="7">
    <location>
        <begin position="1454"/>
        <end position="1482"/>
    </location>
</feature>
<feature type="short sequence motif" description="PDZ-binding" evidence="1">
    <location>
        <begin position="1480"/>
        <end position="1482"/>
    </location>
</feature>
<feature type="compositionally biased region" description="Acidic residues" evidence="7">
    <location>
        <begin position="1472"/>
        <end position="1482"/>
    </location>
</feature>
<feature type="binding site" evidence="1">
    <location>
        <position position="401"/>
    </location>
    <ligand>
        <name>ATP</name>
        <dbReference type="ChEBI" id="CHEBI:30616"/>
        <label>1</label>
    </ligand>
</feature>
<feature type="binding site" evidence="5">
    <location>
        <begin position="458"/>
        <end position="465"/>
    </location>
    <ligand>
        <name>ATP</name>
        <dbReference type="ChEBI" id="CHEBI:30616"/>
        <label>1</label>
    </ligand>
</feature>
<feature type="binding site" evidence="2">
    <location>
        <position position="493"/>
    </location>
    <ligand>
        <name>ATP</name>
        <dbReference type="ChEBI" id="CHEBI:30616"/>
        <label>1</label>
    </ligand>
</feature>
<feature type="binding site" evidence="1">
    <location>
        <position position="1221"/>
    </location>
    <ligand>
        <name>ATP</name>
        <dbReference type="ChEBI" id="CHEBI:30616"/>
        <label>2</label>
    </ligand>
</feature>
<feature type="binding site" evidence="5">
    <location>
        <begin position="1246"/>
        <end position="1253"/>
    </location>
    <ligand>
        <name>ATP</name>
        <dbReference type="ChEBI" id="CHEBI:30616"/>
        <label>2</label>
    </ligand>
</feature>
<feature type="modified residue" description="Phosphoserine" evidence="1">
    <location>
        <position position="549"/>
    </location>
</feature>
<feature type="modified residue" description="Phosphoserine" evidence="1">
    <location>
        <position position="660"/>
    </location>
</feature>
<feature type="modified residue" description="Phosphoserine; by PKA" evidence="1">
    <location>
        <position position="670"/>
    </location>
</feature>
<feature type="modified residue" description="Phosphoserine" evidence="1">
    <location>
        <position position="686"/>
    </location>
</feature>
<feature type="modified residue" description="Phosphoserine" evidence="1">
    <location>
        <position position="700"/>
    </location>
</feature>
<feature type="modified residue" description="Phosphoserine" evidence="1">
    <location>
        <position position="712"/>
    </location>
</feature>
<feature type="modified residue" description="Phosphothreonine" evidence="1">
    <location>
        <position position="717"/>
    </location>
</feature>
<feature type="modified residue" description="Phosphoserine" evidence="1">
    <location>
        <position position="737"/>
    </location>
</feature>
<feature type="modified residue" description="Phosphoserine" evidence="1">
    <location>
        <position position="768"/>
    </location>
</feature>
<feature type="modified residue" description="Phosphoserine" evidence="1">
    <location>
        <position position="791"/>
    </location>
</feature>
<feature type="modified residue" description="Phosphoserine" evidence="1">
    <location>
        <position position="796"/>
    </location>
</feature>
<feature type="modified residue" description="Phosphoserine" evidence="1">
    <location>
        <position position="814"/>
    </location>
</feature>
<feature type="modified residue" description="Phosphoserine" evidence="1">
    <location>
        <position position="1446"/>
    </location>
</feature>
<feature type="modified residue" description="Phosphoserine" evidence="1">
    <location>
        <position position="1458"/>
    </location>
</feature>
<feature type="lipid moiety-binding region" description="S-palmitoyl cysteine" evidence="1">
    <location>
        <position position="524"/>
    </location>
</feature>
<feature type="lipid moiety-binding region" description="S-palmitoyl cysteine" evidence="1">
    <location>
        <position position="1397"/>
    </location>
</feature>
<feature type="glycosylation site" description="N-linked (GlcNAc...) asparagine" evidence="4">
    <location>
        <position position="895"/>
    </location>
</feature>
<feature type="glycosylation site" description="N-linked (GlcNAc...) asparagine" evidence="4">
    <location>
        <position position="901"/>
    </location>
</feature>
<feature type="cross-link" description="Glycyl lysine isopeptide (Lys-Gly) (interchain with G-Cter in ubiquitin)" evidence="1">
    <location>
        <position position="688"/>
    </location>
</feature>
<evidence type="ECO:0000250" key="1">
    <source>
        <dbReference type="UniProtKB" id="P13569"/>
    </source>
</evidence>
<evidence type="ECO:0000250" key="2">
    <source>
        <dbReference type="UniProtKB" id="P26361"/>
    </source>
</evidence>
<evidence type="ECO:0000250" key="3">
    <source>
        <dbReference type="UniProtKB" id="P34158"/>
    </source>
</evidence>
<evidence type="ECO:0000255" key="4"/>
<evidence type="ECO:0000255" key="5">
    <source>
        <dbReference type="PROSITE-ProRule" id="PRU00434"/>
    </source>
</evidence>
<evidence type="ECO:0000255" key="6">
    <source>
        <dbReference type="PROSITE-ProRule" id="PRU00441"/>
    </source>
</evidence>
<evidence type="ECO:0000256" key="7">
    <source>
        <dbReference type="SAM" id="MobiDB-lite"/>
    </source>
</evidence>
<evidence type="ECO:0000305" key="8"/>